<organism>
    <name type="scientific">Acidithiobacillus ferrooxidans</name>
    <name type="common">Thiobacillus ferrooxidans</name>
    <dbReference type="NCBI Taxonomy" id="920"/>
    <lineage>
        <taxon>Bacteria</taxon>
        <taxon>Pseudomonadati</taxon>
        <taxon>Pseudomonadota</taxon>
        <taxon>Acidithiobacillia</taxon>
        <taxon>Acidithiobacillales</taxon>
        <taxon>Acidithiobacillaceae</taxon>
        <taxon>Acidithiobacillus</taxon>
    </lineage>
</organism>
<dbReference type="EC" id="1.12.2.1"/>
<dbReference type="GO" id="GO:0047806">
    <property type="term" value="F:cytochrome-c3 hydrogenase activity"/>
    <property type="evidence" value="ECO:0007669"/>
    <property type="project" value="UniProtKB-EC"/>
</dbReference>
<dbReference type="Gene3D" id="3.40.50.700">
    <property type="entry name" value="NADH:ubiquinone oxidoreductase-like, 20kDa subunit"/>
    <property type="match status" value="1"/>
</dbReference>
<dbReference type="InterPro" id="IPR037024">
    <property type="entry name" value="NiFe_Hase_small_N_sf"/>
</dbReference>
<dbReference type="SUPFAM" id="SSF56770">
    <property type="entry name" value="HydA/Nqo6-like"/>
    <property type="match status" value="1"/>
</dbReference>
<gene>
    <name type="primary">hoxK</name>
</gene>
<comment type="catalytic activity">
    <reaction>
        <text>2 Fe(III)-[cytochrome c3] + H2 = 2 Fe(II)-[cytochrome c3] + 2 H(+)</text>
        <dbReference type="Rhea" id="RHEA:20625"/>
        <dbReference type="Rhea" id="RHEA-COMP:11576"/>
        <dbReference type="Rhea" id="RHEA-COMP:11577"/>
        <dbReference type="ChEBI" id="CHEBI:15378"/>
        <dbReference type="ChEBI" id="CHEBI:18276"/>
        <dbReference type="ChEBI" id="CHEBI:29033"/>
        <dbReference type="ChEBI" id="CHEBI:29034"/>
        <dbReference type="EC" id="1.12.2.1"/>
    </reaction>
</comment>
<comment type="cofactor">
    <cofactor>
        <name>Fe cation</name>
        <dbReference type="ChEBI" id="CHEBI:24875"/>
    </cofactor>
</comment>
<protein>
    <recommendedName>
        <fullName>Cytochrome c3 hydrogenase small chain</fullName>
        <shortName>Hydrogenase</shortName>
        <ecNumber>1.12.2.1</ecNumber>
    </recommendedName>
</protein>
<name>HC3S_ACIFR</name>
<keyword id="KW-0903">Direct protein sequencing</keyword>
<keyword id="KW-0408">Iron</keyword>
<keyword id="KW-0560">Oxidoreductase</keyword>
<proteinExistence type="evidence at protein level"/>
<reference key="1">
    <citation type="journal article" date="1996" name="Arch. Microbiol.">
        <title>Purification and characterization of the hydrogenase from Thiobacillus ferrooxidans.</title>
        <authorList>
            <person name="Fischer J."/>
            <person name="Quentmeier A."/>
            <person name="Kostka S."/>
            <person name="Kraft R."/>
            <person name="Friedrich C.G."/>
        </authorList>
    </citation>
    <scope>PROTEIN SEQUENCE</scope>
    <source>
        <strain>ATCC 19859 / BCRC 13033 / JCM 3863 / NCIMB 9490</strain>
    </source>
</reference>
<accession>P80510</accession>
<feature type="chain" id="PRO_0000083914" description="Cytochrome c3 hydrogenase small chain">
    <location>
        <begin position="1"/>
        <end position="40" status="greater than"/>
    </location>
</feature>
<feature type="non-terminal residue">
    <location>
        <position position="40"/>
    </location>
</feature>
<sequence>ANVLWLQGGAXSGNTMSFLNAEEPSAXDLVTDFGINVLXQ</sequence>